<feature type="chain" id="PRO_1000139137" description="Uracil phosphoribosyltransferase">
    <location>
        <begin position="1"/>
        <end position="211"/>
    </location>
</feature>
<feature type="binding site" evidence="1">
    <location>
        <position position="79"/>
    </location>
    <ligand>
        <name>5-phospho-alpha-D-ribose 1-diphosphate</name>
        <dbReference type="ChEBI" id="CHEBI:58017"/>
    </ligand>
</feature>
<feature type="binding site" evidence="1">
    <location>
        <position position="104"/>
    </location>
    <ligand>
        <name>5-phospho-alpha-D-ribose 1-diphosphate</name>
        <dbReference type="ChEBI" id="CHEBI:58017"/>
    </ligand>
</feature>
<feature type="binding site" evidence="1">
    <location>
        <begin position="131"/>
        <end position="139"/>
    </location>
    <ligand>
        <name>5-phospho-alpha-D-ribose 1-diphosphate</name>
        <dbReference type="ChEBI" id="CHEBI:58017"/>
    </ligand>
</feature>
<feature type="binding site" evidence="1">
    <location>
        <position position="196"/>
    </location>
    <ligand>
        <name>uracil</name>
        <dbReference type="ChEBI" id="CHEBI:17568"/>
    </ligand>
</feature>
<feature type="binding site" evidence="1">
    <location>
        <begin position="201"/>
        <end position="203"/>
    </location>
    <ligand>
        <name>uracil</name>
        <dbReference type="ChEBI" id="CHEBI:17568"/>
    </ligand>
</feature>
<feature type="binding site" evidence="1">
    <location>
        <position position="202"/>
    </location>
    <ligand>
        <name>5-phospho-alpha-D-ribose 1-diphosphate</name>
        <dbReference type="ChEBI" id="CHEBI:58017"/>
    </ligand>
</feature>
<proteinExistence type="inferred from homology"/>
<dbReference type="EC" id="2.4.2.9" evidence="1"/>
<dbReference type="EMBL" id="AP008937">
    <property type="protein sequence ID" value="BAG26767.1"/>
    <property type="molecule type" value="Genomic_DNA"/>
</dbReference>
<dbReference type="RefSeq" id="WP_003682736.1">
    <property type="nucleotide sequence ID" value="NC_010610.1"/>
</dbReference>
<dbReference type="SMR" id="B2GAT5"/>
<dbReference type="GeneID" id="83715241"/>
<dbReference type="KEGG" id="lfe:LAF_0431"/>
<dbReference type="eggNOG" id="COG0035">
    <property type="taxonomic scope" value="Bacteria"/>
</dbReference>
<dbReference type="HOGENOM" id="CLU_067096_2_2_9"/>
<dbReference type="UniPathway" id="UPA00574">
    <property type="reaction ID" value="UER00636"/>
</dbReference>
<dbReference type="Proteomes" id="UP000001697">
    <property type="component" value="Chromosome"/>
</dbReference>
<dbReference type="GO" id="GO:0005525">
    <property type="term" value="F:GTP binding"/>
    <property type="evidence" value="ECO:0007669"/>
    <property type="project" value="UniProtKB-KW"/>
</dbReference>
<dbReference type="GO" id="GO:0000287">
    <property type="term" value="F:magnesium ion binding"/>
    <property type="evidence" value="ECO:0007669"/>
    <property type="project" value="UniProtKB-UniRule"/>
</dbReference>
<dbReference type="GO" id="GO:0004845">
    <property type="term" value="F:uracil phosphoribosyltransferase activity"/>
    <property type="evidence" value="ECO:0007669"/>
    <property type="project" value="UniProtKB-UniRule"/>
</dbReference>
<dbReference type="GO" id="GO:0044206">
    <property type="term" value="P:UMP salvage"/>
    <property type="evidence" value="ECO:0007669"/>
    <property type="project" value="UniProtKB-UniRule"/>
</dbReference>
<dbReference type="GO" id="GO:0006223">
    <property type="term" value="P:uracil salvage"/>
    <property type="evidence" value="ECO:0007669"/>
    <property type="project" value="InterPro"/>
</dbReference>
<dbReference type="CDD" id="cd06223">
    <property type="entry name" value="PRTases_typeI"/>
    <property type="match status" value="1"/>
</dbReference>
<dbReference type="FunFam" id="3.40.50.2020:FF:000003">
    <property type="entry name" value="Uracil phosphoribosyltransferase"/>
    <property type="match status" value="1"/>
</dbReference>
<dbReference type="Gene3D" id="3.40.50.2020">
    <property type="match status" value="1"/>
</dbReference>
<dbReference type="HAMAP" id="MF_01218_B">
    <property type="entry name" value="Upp_B"/>
    <property type="match status" value="1"/>
</dbReference>
<dbReference type="InterPro" id="IPR000836">
    <property type="entry name" value="PRibTrfase_dom"/>
</dbReference>
<dbReference type="InterPro" id="IPR029057">
    <property type="entry name" value="PRTase-like"/>
</dbReference>
<dbReference type="InterPro" id="IPR034332">
    <property type="entry name" value="Upp_B"/>
</dbReference>
<dbReference type="InterPro" id="IPR050054">
    <property type="entry name" value="UPRTase/APRTase"/>
</dbReference>
<dbReference type="InterPro" id="IPR005765">
    <property type="entry name" value="Ura_phspho_trans"/>
</dbReference>
<dbReference type="NCBIfam" id="NF001097">
    <property type="entry name" value="PRK00129.1"/>
    <property type="match status" value="1"/>
</dbReference>
<dbReference type="NCBIfam" id="TIGR01091">
    <property type="entry name" value="upp"/>
    <property type="match status" value="1"/>
</dbReference>
<dbReference type="PANTHER" id="PTHR32315">
    <property type="entry name" value="ADENINE PHOSPHORIBOSYLTRANSFERASE"/>
    <property type="match status" value="1"/>
</dbReference>
<dbReference type="PANTHER" id="PTHR32315:SF4">
    <property type="entry name" value="URACIL PHOSPHORIBOSYLTRANSFERASE, CHLOROPLASTIC"/>
    <property type="match status" value="1"/>
</dbReference>
<dbReference type="Pfam" id="PF14681">
    <property type="entry name" value="UPRTase"/>
    <property type="match status" value="1"/>
</dbReference>
<dbReference type="SUPFAM" id="SSF53271">
    <property type="entry name" value="PRTase-like"/>
    <property type="match status" value="1"/>
</dbReference>
<gene>
    <name evidence="1" type="primary">upp</name>
    <name type="ordered locus">LAF_0431</name>
</gene>
<reference key="1">
    <citation type="journal article" date="2008" name="DNA Res.">
        <title>Comparative genome analysis of Lactobacillus reuteri and Lactobacillus fermentum reveal a genomic island for reuterin and cobalamin production.</title>
        <authorList>
            <person name="Morita H."/>
            <person name="Toh H."/>
            <person name="Fukuda S."/>
            <person name="Horikawa H."/>
            <person name="Oshima K."/>
            <person name="Suzuki T."/>
            <person name="Murakami M."/>
            <person name="Hisamatsu S."/>
            <person name="Kato Y."/>
            <person name="Takizawa T."/>
            <person name="Fukuoka H."/>
            <person name="Yoshimura T."/>
            <person name="Itoh K."/>
            <person name="O'Sullivan D.J."/>
            <person name="McKay L.L."/>
            <person name="Ohno H."/>
            <person name="Kikuchi J."/>
            <person name="Masaoka T."/>
            <person name="Hattori M."/>
        </authorList>
    </citation>
    <scope>NUCLEOTIDE SEQUENCE [LARGE SCALE GENOMIC DNA]</scope>
    <source>
        <strain>NBRC 3956 / LMG 18251</strain>
    </source>
</reference>
<organism>
    <name type="scientific">Limosilactobacillus fermentum (strain NBRC 3956 / LMG 18251)</name>
    <name type="common">Lactobacillus fermentum</name>
    <dbReference type="NCBI Taxonomy" id="334390"/>
    <lineage>
        <taxon>Bacteria</taxon>
        <taxon>Bacillati</taxon>
        <taxon>Bacillota</taxon>
        <taxon>Bacilli</taxon>
        <taxon>Lactobacillales</taxon>
        <taxon>Lactobacillaceae</taxon>
        <taxon>Limosilactobacillus</taxon>
    </lineage>
</organism>
<protein>
    <recommendedName>
        <fullName evidence="1">Uracil phosphoribosyltransferase</fullName>
        <ecNumber evidence="1">2.4.2.9</ecNumber>
    </recommendedName>
    <alternativeName>
        <fullName evidence="1">UMP pyrophosphorylase</fullName>
    </alternativeName>
    <alternativeName>
        <fullName evidence="1">UPRTase</fullName>
    </alternativeName>
</protein>
<comment type="function">
    <text evidence="1">Catalyzes the conversion of uracil and 5-phospho-alpha-D-ribose 1-diphosphate (PRPP) to UMP and diphosphate.</text>
</comment>
<comment type="catalytic activity">
    <reaction evidence="1">
        <text>UMP + diphosphate = 5-phospho-alpha-D-ribose 1-diphosphate + uracil</text>
        <dbReference type="Rhea" id="RHEA:13017"/>
        <dbReference type="ChEBI" id="CHEBI:17568"/>
        <dbReference type="ChEBI" id="CHEBI:33019"/>
        <dbReference type="ChEBI" id="CHEBI:57865"/>
        <dbReference type="ChEBI" id="CHEBI:58017"/>
        <dbReference type="EC" id="2.4.2.9"/>
    </reaction>
</comment>
<comment type="cofactor">
    <cofactor evidence="1">
        <name>Mg(2+)</name>
        <dbReference type="ChEBI" id="CHEBI:18420"/>
    </cofactor>
    <text evidence="1">Binds 1 Mg(2+) ion per subunit. The magnesium is bound as Mg-PRPP.</text>
</comment>
<comment type="activity regulation">
    <text evidence="1">Allosterically activated by GTP.</text>
</comment>
<comment type="pathway">
    <text evidence="1">Pyrimidine metabolism; UMP biosynthesis via salvage pathway; UMP from uracil: step 1/1.</text>
</comment>
<comment type="similarity">
    <text evidence="1">Belongs to the UPRTase family.</text>
</comment>
<accession>B2GAT5</accession>
<evidence type="ECO:0000255" key="1">
    <source>
        <dbReference type="HAMAP-Rule" id="MF_01218"/>
    </source>
</evidence>
<name>UPP_LIMF3</name>
<keyword id="KW-0021">Allosteric enzyme</keyword>
<keyword id="KW-0328">Glycosyltransferase</keyword>
<keyword id="KW-0342">GTP-binding</keyword>
<keyword id="KW-0460">Magnesium</keyword>
<keyword id="KW-0547">Nucleotide-binding</keyword>
<keyword id="KW-1185">Reference proteome</keyword>
<keyword id="KW-0808">Transferase</keyword>
<sequence length="211" mass="23338">MGKFEVLDHPLIQHKLTMIRDKRVGTKVFRETVKEISTLMAYEVSRNMPLKDVEVETPIAKTTQKELAGKKVAIIPILRAGLGMVDGMTELIPAAKIGFIGMYRDEETLKPHEYFVKLPNDITERQLFIVDPMLATGGSAVMAIEALKKRGCQEKNMKFACLVAAPEGVKAVQEAFPDVDIYTAGLDERLNEDGYIVPGLGDAGDRLFGTK</sequence>